<sequence length="201" mass="22001">MLAFTLRFIKNKRYLATLAGALVIIAGLTSQHAWSGNGLPQINGKALAALAKQHPVVVLFRHAERCDRSDNTCLSDSTGITVNGAQDARALGKAFSADIQNYNLYSSNTVRTIQSATWFSAGRSFTVDKKMMDCGSGIYASINTLLKKSQNKNIVIFTHNHCLTYIAKNKRGVKFDPDYLNALVMHAENGKLFLDGEFVPG</sequence>
<protein>
    <recommendedName>
        <fullName evidence="1">Lipopolysaccharide core heptose(II)-phosphate phosphatase</fullName>
        <ecNumber evidence="1">3.1.3.-</ecNumber>
    </recommendedName>
</protein>
<accession>B5BCP9</accession>
<comment type="function">
    <text evidence="1">Catalyzes the dephosphorylation of heptose(II) of the outer membrane lipopolysaccharide core.</text>
</comment>
<comment type="pathway">
    <text evidence="1">Bacterial outer membrane biogenesis; lipopolysaccharide metabolism.</text>
</comment>
<comment type="subcellular location">
    <subcellularLocation>
        <location evidence="1">Periplasm</location>
    </subcellularLocation>
</comment>
<comment type="similarity">
    <text evidence="1">Belongs to the phosphoglycerate mutase family. Ais subfamily.</text>
</comment>
<dbReference type="EC" id="3.1.3.-" evidence="1"/>
<dbReference type="EMBL" id="FM200053">
    <property type="protein sequence ID" value="CAR58660.1"/>
    <property type="molecule type" value="Genomic_DNA"/>
</dbReference>
<dbReference type="SMR" id="B5BCP9"/>
<dbReference type="KEGG" id="sek:SSPA0531"/>
<dbReference type="HOGENOM" id="CLU_106705_1_0_6"/>
<dbReference type="UniPathway" id="UPA00451"/>
<dbReference type="Proteomes" id="UP000001869">
    <property type="component" value="Chromosome"/>
</dbReference>
<dbReference type="GO" id="GO:0042597">
    <property type="term" value="C:periplasmic space"/>
    <property type="evidence" value="ECO:0007669"/>
    <property type="project" value="UniProtKB-SubCell"/>
</dbReference>
<dbReference type="GO" id="GO:0016791">
    <property type="term" value="F:phosphatase activity"/>
    <property type="evidence" value="ECO:0007669"/>
    <property type="project" value="UniProtKB-UniRule"/>
</dbReference>
<dbReference type="GO" id="GO:0008653">
    <property type="term" value="P:lipopolysaccharide metabolic process"/>
    <property type="evidence" value="ECO:0007669"/>
    <property type="project" value="UniProtKB-UniRule"/>
</dbReference>
<dbReference type="CDD" id="cd07040">
    <property type="entry name" value="HP"/>
    <property type="match status" value="1"/>
</dbReference>
<dbReference type="Gene3D" id="3.40.50.1240">
    <property type="entry name" value="Phosphoglycerate mutase-like"/>
    <property type="match status" value="1"/>
</dbReference>
<dbReference type="HAMAP" id="MF_01868">
    <property type="entry name" value="Ais"/>
    <property type="match status" value="1"/>
</dbReference>
<dbReference type="InterPro" id="IPR029033">
    <property type="entry name" value="His_PPase_superfam"/>
</dbReference>
<dbReference type="InterPro" id="IPR011310">
    <property type="entry name" value="LipoPS_heptP_Pase"/>
</dbReference>
<dbReference type="NCBIfam" id="NF011945">
    <property type="entry name" value="PRK15416.1"/>
    <property type="match status" value="1"/>
</dbReference>
<dbReference type="PIRSF" id="PIRSF011416">
    <property type="entry name" value="Ais-TraG-AfrS"/>
    <property type="match status" value="1"/>
</dbReference>
<dbReference type="SUPFAM" id="SSF53254">
    <property type="entry name" value="Phosphoglycerate mutase-like"/>
    <property type="match status" value="1"/>
</dbReference>
<gene>
    <name evidence="1" type="primary">ais</name>
    <name type="ordered locus">SSPA0531</name>
</gene>
<evidence type="ECO:0000255" key="1">
    <source>
        <dbReference type="HAMAP-Rule" id="MF_01868"/>
    </source>
</evidence>
<keyword id="KW-0378">Hydrolase</keyword>
<keyword id="KW-0574">Periplasm</keyword>
<keyword id="KW-0732">Signal</keyword>
<proteinExistence type="inferred from homology"/>
<reference key="1">
    <citation type="journal article" date="2009" name="BMC Genomics">
        <title>Pseudogene accumulation in the evolutionary histories of Salmonella enterica serovars Paratyphi A and Typhi.</title>
        <authorList>
            <person name="Holt K.E."/>
            <person name="Thomson N.R."/>
            <person name="Wain J."/>
            <person name="Langridge G.C."/>
            <person name="Hasan R."/>
            <person name="Bhutta Z.A."/>
            <person name="Quail M.A."/>
            <person name="Norbertczak H."/>
            <person name="Walker D."/>
            <person name="Simmonds M."/>
            <person name="White B."/>
            <person name="Bason N."/>
            <person name="Mungall K."/>
            <person name="Dougan G."/>
            <person name="Parkhill J."/>
        </authorList>
    </citation>
    <scope>NUCLEOTIDE SEQUENCE [LARGE SCALE GENOMIC DNA]</scope>
    <source>
        <strain>AKU_12601</strain>
    </source>
</reference>
<name>AIS_SALPK</name>
<organism>
    <name type="scientific">Salmonella paratyphi A (strain AKU_12601)</name>
    <dbReference type="NCBI Taxonomy" id="554290"/>
    <lineage>
        <taxon>Bacteria</taxon>
        <taxon>Pseudomonadati</taxon>
        <taxon>Pseudomonadota</taxon>
        <taxon>Gammaproteobacteria</taxon>
        <taxon>Enterobacterales</taxon>
        <taxon>Enterobacteriaceae</taxon>
        <taxon>Salmonella</taxon>
    </lineage>
</organism>
<feature type="signal peptide" evidence="1">
    <location>
        <begin position="1"/>
        <end position="35"/>
    </location>
</feature>
<feature type="chain" id="PRO_0000380581" description="Lipopolysaccharide core heptose(II)-phosphate phosphatase">
    <location>
        <begin position="36"/>
        <end position="201"/>
    </location>
</feature>